<keyword id="KW-0997">Cell inner membrane</keyword>
<keyword id="KW-1003">Cell membrane</keyword>
<keyword id="KW-0472">Membrane</keyword>
<keyword id="KW-0812">Transmembrane</keyword>
<keyword id="KW-1133">Transmembrane helix</keyword>
<feature type="chain" id="PRO_1000201574" description="PhoP/PhoQ regulator MgrB">
    <location>
        <begin position="1"/>
        <end position="47"/>
    </location>
</feature>
<feature type="transmembrane region" description="Helical" evidence="1">
    <location>
        <begin position="6"/>
        <end position="26"/>
    </location>
</feature>
<proteinExistence type="inferred from homology"/>
<evidence type="ECO:0000255" key="1">
    <source>
        <dbReference type="HAMAP-Rule" id="MF_01596"/>
    </source>
</evidence>
<organism>
    <name type="scientific">Salmonella newport (strain SL254)</name>
    <dbReference type="NCBI Taxonomy" id="423368"/>
    <lineage>
        <taxon>Bacteria</taxon>
        <taxon>Pseudomonadati</taxon>
        <taxon>Pseudomonadota</taxon>
        <taxon>Gammaproteobacteria</taxon>
        <taxon>Enterobacterales</taxon>
        <taxon>Enterobacteriaceae</taxon>
        <taxon>Salmonella</taxon>
    </lineage>
</organism>
<dbReference type="EMBL" id="CP001113">
    <property type="protein sequence ID" value="ACF64437.1"/>
    <property type="molecule type" value="Genomic_DNA"/>
</dbReference>
<dbReference type="RefSeq" id="WP_000714547.1">
    <property type="nucleotide sequence ID" value="NZ_CCMR01000003.1"/>
</dbReference>
<dbReference type="GeneID" id="66756315"/>
<dbReference type="KEGG" id="see:SNSL254_A1979"/>
<dbReference type="HOGENOM" id="CLU_208030_1_0_6"/>
<dbReference type="Proteomes" id="UP000008824">
    <property type="component" value="Chromosome"/>
</dbReference>
<dbReference type="GO" id="GO:0005886">
    <property type="term" value="C:plasma membrane"/>
    <property type="evidence" value="ECO:0007669"/>
    <property type="project" value="UniProtKB-SubCell"/>
</dbReference>
<dbReference type="GO" id="GO:0070298">
    <property type="term" value="P:negative regulation of phosphorelay signal transduction system"/>
    <property type="evidence" value="ECO:0007669"/>
    <property type="project" value="UniProtKB-UniRule"/>
</dbReference>
<dbReference type="HAMAP" id="MF_01596">
    <property type="entry name" value="MgrB"/>
    <property type="match status" value="1"/>
</dbReference>
<dbReference type="InterPro" id="IPR020907">
    <property type="entry name" value="MgrB"/>
</dbReference>
<dbReference type="NCBIfam" id="NF007635">
    <property type="entry name" value="PRK10299.1"/>
    <property type="match status" value="1"/>
</dbReference>
<dbReference type="Pfam" id="PF13998">
    <property type="entry name" value="MgrB"/>
    <property type="match status" value="1"/>
</dbReference>
<reference key="1">
    <citation type="journal article" date="2011" name="J. Bacteriol.">
        <title>Comparative genomics of 28 Salmonella enterica isolates: evidence for CRISPR-mediated adaptive sublineage evolution.</title>
        <authorList>
            <person name="Fricke W.F."/>
            <person name="Mammel M.K."/>
            <person name="McDermott P.F."/>
            <person name="Tartera C."/>
            <person name="White D.G."/>
            <person name="Leclerc J.E."/>
            <person name="Ravel J."/>
            <person name="Cebula T.A."/>
        </authorList>
    </citation>
    <scope>NUCLEOTIDE SEQUENCE [LARGE SCALE GENOMIC DNA]</scope>
    <source>
        <strain>SL254</strain>
    </source>
</reference>
<comment type="function">
    <text evidence="1">PhoP-regulated transcription is redox-sensitive, being activated when the periplasm becomes more reducing. MgrB acts between DsbA/DsbB and PhoP/PhoQ in this pathway. Represses PhoP/PhoQ signaling, possibly by binding to the periplasmic domain of PhoQ, altering its activity and that of downstream effector PhoP.</text>
</comment>
<comment type="subunit">
    <text evidence="1">May form homooligomers. Probably interacts with the periplasmic domain of PhoQ.</text>
</comment>
<comment type="subcellular location">
    <subcellularLocation>
        <location evidence="1">Cell inner membrane</location>
        <topology evidence="1">Single-pass membrane protein</topology>
    </subcellularLocation>
</comment>
<comment type="similarity">
    <text evidence="1">Belongs to the MgrB family.</text>
</comment>
<sequence>MKKFRWVVLGIVVVVCLLLWAQVFNIMCDQDVQFFSGICAINKFIPW</sequence>
<protein>
    <recommendedName>
        <fullName evidence="1">PhoP/PhoQ regulator MgrB</fullName>
    </recommendedName>
</protein>
<gene>
    <name evidence="1" type="primary">mgrB</name>
    <name type="ordered locus">SNSL254_A1979</name>
</gene>
<accession>B4SV80</accession>
<name>MGRB_SALNS</name>